<dbReference type="EC" id="5.3.3.2" evidence="1"/>
<dbReference type="EMBL" id="BX571857">
    <property type="protein sequence ID" value="CAG44050.1"/>
    <property type="molecule type" value="Genomic_DNA"/>
</dbReference>
<dbReference type="RefSeq" id="WP_001279387.1">
    <property type="nucleotide sequence ID" value="NC_002953.3"/>
</dbReference>
<dbReference type="SMR" id="Q6G6X4"/>
<dbReference type="KEGG" id="sas:SAS2237"/>
<dbReference type="HOGENOM" id="CLU_065515_0_0_9"/>
<dbReference type="GO" id="GO:0005737">
    <property type="term" value="C:cytoplasm"/>
    <property type="evidence" value="ECO:0007669"/>
    <property type="project" value="UniProtKB-SubCell"/>
</dbReference>
<dbReference type="GO" id="GO:0010181">
    <property type="term" value="F:FMN binding"/>
    <property type="evidence" value="ECO:0007669"/>
    <property type="project" value="UniProtKB-UniRule"/>
</dbReference>
<dbReference type="GO" id="GO:0004452">
    <property type="term" value="F:isopentenyl-diphosphate delta-isomerase activity"/>
    <property type="evidence" value="ECO:0007669"/>
    <property type="project" value="UniProtKB-UniRule"/>
</dbReference>
<dbReference type="GO" id="GO:0000287">
    <property type="term" value="F:magnesium ion binding"/>
    <property type="evidence" value="ECO:0007669"/>
    <property type="project" value="UniProtKB-UniRule"/>
</dbReference>
<dbReference type="GO" id="GO:0070402">
    <property type="term" value="F:NADPH binding"/>
    <property type="evidence" value="ECO:0007669"/>
    <property type="project" value="UniProtKB-UniRule"/>
</dbReference>
<dbReference type="GO" id="GO:0016491">
    <property type="term" value="F:oxidoreductase activity"/>
    <property type="evidence" value="ECO:0007669"/>
    <property type="project" value="InterPro"/>
</dbReference>
<dbReference type="GO" id="GO:0008299">
    <property type="term" value="P:isoprenoid biosynthetic process"/>
    <property type="evidence" value="ECO:0007669"/>
    <property type="project" value="UniProtKB-UniRule"/>
</dbReference>
<dbReference type="CDD" id="cd02811">
    <property type="entry name" value="IDI-2_FMN"/>
    <property type="match status" value="1"/>
</dbReference>
<dbReference type="Gene3D" id="3.20.20.70">
    <property type="entry name" value="Aldolase class I"/>
    <property type="match status" value="1"/>
</dbReference>
<dbReference type="HAMAP" id="MF_00354">
    <property type="entry name" value="Idi_2"/>
    <property type="match status" value="1"/>
</dbReference>
<dbReference type="InterPro" id="IPR013785">
    <property type="entry name" value="Aldolase_TIM"/>
</dbReference>
<dbReference type="InterPro" id="IPR000262">
    <property type="entry name" value="FMN-dep_DH"/>
</dbReference>
<dbReference type="InterPro" id="IPR011179">
    <property type="entry name" value="IPdP_isomerase"/>
</dbReference>
<dbReference type="NCBIfam" id="TIGR02151">
    <property type="entry name" value="IPP_isom_2"/>
    <property type="match status" value="1"/>
</dbReference>
<dbReference type="PANTHER" id="PTHR43665">
    <property type="entry name" value="ISOPENTENYL-DIPHOSPHATE DELTA-ISOMERASE"/>
    <property type="match status" value="1"/>
</dbReference>
<dbReference type="PANTHER" id="PTHR43665:SF1">
    <property type="entry name" value="ISOPENTENYL-DIPHOSPHATE DELTA-ISOMERASE"/>
    <property type="match status" value="1"/>
</dbReference>
<dbReference type="Pfam" id="PF01070">
    <property type="entry name" value="FMN_dh"/>
    <property type="match status" value="1"/>
</dbReference>
<dbReference type="PIRSF" id="PIRSF003314">
    <property type="entry name" value="IPP_isomerase"/>
    <property type="match status" value="1"/>
</dbReference>
<dbReference type="SUPFAM" id="SSF51395">
    <property type="entry name" value="FMN-linked oxidoreductases"/>
    <property type="match status" value="1"/>
</dbReference>
<accession>Q6G6X4</accession>
<reference key="1">
    <citation type="journal article" date="2004" name="Proc. Natl. Acad. Sci. U.S.A.">
        <title>Complete genomes of two clinical Staphylococcus aureus strains: evidence for the rapid evolution of virulence and drug resistance.</title>
        <authorList>
            <person name="Holden M.T.G."/>
            <person name="Feil E.J."/>
            <person name="Lindsay J.A."/>
            <person name="Peacock S.J."/>
            <person name="Day N.P.J."/>
            <person name="Enright M.C."/>
            <person name="Foster T.J."/>
            <person name="Moore C.E."/>
            <person name="Hurst L."/>
            <person name="Atkin R."/>
            <person name="Barron A."/>
            <person name="Bason N."/>
            <person name="Bentley S.D."/>
            <person name="Chillingworth C."/>
            <person name="Chillingworth T."/>
            <person name="Churcher C."/>
            <person name="Clark L."/>
            <person name="Corton C."/>
            <person name="Cronin A."/>
            <person name="Doggett J."/>
            <person name="Dowd L."/>
            <person name="Feltwell T."/>
            <person name="Hance Z."/>
            <person name="Harris B."/>
            <person name="Hauser H."/>
            <person name="Holroyd S."/>
            <person name="Jagels K."/>
            <person name="James K.D."/>
            <person name="Lennard N."/>
            <person name="Line A."/>
            <person name="Mayes R."/>
            <person name="Moule S."/>
            <person name="Mungall K."/>
            <person name="Ormond D."/>
            <person name="Quail M.A."/>
            <person name="Rabbinowitsch E."/>
            <person name="Rutherford K.M."/>
            <person name="Sanders M."/>
            <person name="Sharp S."/>
            <person name="Simmonds M."/>
            <person name="Stevens K."/>
            <person name="Whitehead S."/>
            <person name="Barrell B.G."/>
            <person name="Spratt B.G."/>
            <person name="Parkhill J."/>
        </authorList>
    </citation>
    <scope>NUCLEOTIDE SEQUENCE [LARGE SCALE GENOMIC DNA]</scope>
    <source>
        <strain>MSSA476</strain>
    </source>
</reference>
<evidence type="ECO:0000255" key="1">
    <source>
        <dbReference type="HAMAP-Rule" id="MF_00354"/>
    </source>
</evidence>
<sequence>MSDFQREQRKNEHVEIAMAQSDAMYSDFDKMRFVHHSIPSINVNDIDLTSQTPDLTMAYPVYINAMTGGSEWTKNINEKLAVVARETGLAMAVGSTHAALRNPRMAETFTIARKMNPEGMIFSNVGADVPVEKALEAVELLEAQALQIHVNSPQELVMPEGNREFVTWLDNIASIVSRVSVPVIIKEVGFGMSKELMHDLQQIGVKYVDVSGKGGTNFVDIENERRANKDMDYLSSWGQSTVESLLETTAYQSEISVFASGGLRTPLDAIKSLALGAKATGMSRPFLNQVENNGIAHTVAYVESFIEHMKSIMTMLDAKNIDDLTQKQIVFSPEILSWIEQRSLNIHRG</sequence>
<protein>
    <recommendedName>
        <fullName evidence="1">Isopentenyl-diphosphate delta-isomerase</fullName>
        <shortName evidence="1">IPP isomerase</shortName>
        <ecNumber evidence="1">5.3.3.2</ecNumber>
    </recommendedName>
    <alternativeName>
        <fullName evidence="1">Isopentenyl diphosphate:dimethylallyl diphosphate isomerase</fullName>
    </alternativeName>
    <alternativeName>
        <fullName evidence="1">Isopentenyl pyrophosphate isomerase</fullName>
    </alternativeName>
    <alternativeName>
        <fullName evidence="1">Type 2 isopentenyl diphosphate isomerase</fullName>
        <shortName evidence="1">IDI-2</shortName>
    </alternativeName>
</protein>
<feature type="chain" id="PRO_0000134424" description="Isopentenyl-diphosphate delta-isomerase">
    <location>
        <begin position="1"/>
        <end position="349"/>
    </location>
</feature>
<feature type="binding site" evidence="1">
    <location>
        <begin position="9"/>
        <end position="10"/>
    </location>
    <ligand>
        <name>substrate</name>
    </ligand>
</feature>
<feature type="binding site" evidence="1">
    <location>
        <begin position="65"/>
        <end position="67"/>
    </location>
    <ligand>
        <name>FMN</name>
        <dbReference type="ChEBI" id="CHEBI:58210"/>
    </ligand>
</feature>
<feature type="binding site" evidence="1">
    <location>
        <begin position="95"/>
        <end position="97"/>
    </location>
    <ligand>
        <name>substrate</name>
    </ligand>
</feature>
<feature type="binding site" evidence="1">
    <location>
        <position position="95"/>
    </location>
    <ligand>
        <name>FMN</name>
        <dbReference type="ChEBI" id="CHEBI:58210"/>
    </ligand>
</feature>
<feature type="binding site" evidence="1">
    <location>
        <position position="124"/>
    </location>
    <ligand>
        <name>FMN</name>
        <dbReference type="ChEBI" id="CHEBI:58210"/>
    </ligand>
</feature>
<feature type="binding site" evidence="1">
    <location>
        <position position="154"/>
    </location>
    <ligand>
        <name>substrate</name>
    </ligand>
</feature>
<feature type="binding site" evidence="1">
    <location>
        <position position="155"/>
    </location>
    <ligand>
        <name>Mg(2+)</name>
        <dbReference type="ChEBI" id="CHEBI:18420"/>
    </ligand>
</feature>
<feature type="binding site" evidence="1">
    <location>
        <position position="186"/>
    </location>
    <ligand>
        <name>FMN</name>
        <dbReference type="ChEBI" id="CHEBI:58210"/>
    </ligand>
</feature>
<feature type="binding site" evidence="1">
    <location>
        <position position="211"/>
    </location>
    <ligand>
        <name>FMN</name>
        <dbReference type="ChEBI" id="CHEBI:58210"/>
    </ligand>
</feature>
<feature type="binding site" evidence="1">
    <location>
        <position position="216"/>
    </location>
    <ligand>
        <name>FMN</name>
        <dbReference type="ChEBI" id="CHEBI:58210"/>
    </ligand>
</feature>
<feature type="binding site" evidence="1">
    <location>
        <begin position="262"/>
        <end position="264"/>
    </location>
    <ligand>
        <name>FMN</name>
        <dbReference type="ChEBI" id="CHEBI:58210"/>
    </ligand>
</feature>
<feature type="binding site" evidence="1">
    <location>
        <begin position="283"/>
        <end position="284"/>
    </location>
    <ligand>
        <name>FMN</name>
        <dbReference type="ChEBI" id="CHEBI:58210"/>
    </ligand>
</feature>
<keyword id="KW-0963">Cytoplasm</keyword>
<keyword id="KW-0285">Flavoprotein</keyword>
<keyword id="KW-0288">FMN</keyword>
<keyword id="KW-0413">Isomerase</keyword>
<keyword id="KW-0414">Isoprene biosynthesis</keyword>
<keyword id="KW-0460">Magnesium</keyword>
<keyword id="KW-0479">Metal-binding</keyword>
<keyword id="KW-0521">NADP</keyword>
<organism>
    <name type="scientific">Staphylococcus aureus (strain MSSA476)</name>
    <dbReference type="NCBI Taxonomy" id="282459"/>
    <lineage>
        <taxon>Bacteria</taxon>
        <taxon>Bacillati</taxon>
        <taxon>Bacillota</taxon>
        <taxon>Bacilli</taxon>
        <taxon>Bacillales</taxon>
        <taxon>Staphylococcaceae</taxon>
        <taxon>Staphylococcus</taxon>
    </lineage>
</organism>
<gene>
    <name evidence="1" type="primary">fni</name>
    <name type="ordered locus">SAS2237</name>
</gene>
<comment type="function">
    <text evidence="1">Involved in the biosynthesis of isoprenoids. Catalyzes the 1,3-allylic rearrangement of the homoallylic substrate isopentenyl (IPP) to its allylic isomer, dimethylallyl diphosphate (DMAPP).</text>
</comment>
<comment type="catalytic activity">
    <reaction evidence="1">
        <text>isopentenyl diphosphate = dimethylallyl diphosphate</text>
        <dbReference type="Rhea" id="RHEA:23284"/>
        <dbReference type="ChEBI" id="CHEBI:57623"/>
        <dbReference type="ChEBI" id="CHEBI:128769"/>
        <dbReference type="EC" id="5.3.3.2"/>
    </reaction>
</comment>
<comment type="cofactor">
    <cofactor evidence="1">
        <name>FMN</name>
        <dbReference type="ChEBI" id="CHEBI:58210"/>
    </cofactor>
</comment>
<comment type="cofactor">
    <cofactor evidence="1">
        <name>NADPH</name>
        <dbReference type="ChEBI" id="CHEBI:57783"/>
    </cofactor>
</comment>
<comment type="cofactor">
    <cofactor evidence="1">
        <name>Mg(2+)</name>
        <dbReference type="ChEBI" id="CHEBI:18420"/>
    </cofactor>
</comment>
<comment type="subunit">
    <text evidence="1">Homooctamer. Dimer of tetramers.</text>
</comment>
<comment type="subcellular location">
    <subcellularLocation>
        <location evidence="1">Cytoplasm</location>
    </subcellularLocation>
</comment>
<comment type="similarity">
    <text evidence="1">Belongs to the IPP isomerase type 2 family.</text>
</comment>
<name>IDI2_STAAS</name>
<proteinExistence type="inferred from homology"/>